<name>YNEA_GEOTN</name>
<comment type="function">
    <text evidence="1">Inhibits cell division during the SOS response. Affects a later stage of the cell division protein assembly, after the assembly of the Z ring, by probably suppressing recruitment of FtsL and/or DivIC to the division machinery.</text>
</comment>
<comment type="subcellular location">
    <subcellularLocation>
        <location evidence="1">Cytoplasm</location>
    </subcellularLocation>
</comment>
<comment type="similarity">
    <text evidence="1">Belongs to the YneA family.</text>
</comment>
<comment type="sequence caution" evidence="3">
    <conflict type="erroneous initiation">
        <sequence resource="EMBL-CDS" id="ABO66556"/>
    </conflict>
</comment>
<accession>A4IMK2</accession>
<organism>
    <name type="scientific">Geobacillus thermodenitrificans (strain NG80-2)</name>
    <dbReference type="NCBI Taxonomy" id="420246"/>
    <lineage>
        <taxon>Bacteria</taxon>
        <taxon>Bacillati</taxon>
        <taxon>Bacillota</taxon>
        <taxon>Bacilli</taxon>
        <taxon>Bacillales</taxon>
        <taxon>Anoxybacillaceae</taxon>
        <taxon>Geobacillus</taxon>
    </lineage>
</organism>
<evidence type="ECO:0000255" key="1">
    <source>
        <dbReference type="HAMAP-Rule" id="MF_02014"/>
    </source>
</evidence>
<evidence type="ECO:0000255" key="2">
    <source>
        <dbReference type="PROSITE-ProRule" id="PRU01118"/>
    </source>
</evidence>
<evidence type="ECO:0000305" key="3"/>
<proteinExistence type="inferred from homology"/>
<reference key="1">
    <citation type="journal article" date="2007" name="Proc. Natl. Acad. Sci. U.S.A.">
        <title>Genome and proteome of long-chain alkane degrading Geobacillus thermodenitrificans NG80-2 isolated from a deep-subsurface oil reservoir.</title>
        <authorList>
            <person name="Feng L."/>
            <person name="Wang W."/>
            <person name="Cheng J."/>
            <person name="Ren Y."/>
            <person name="Zhao G."/>
            <person name="Gao C."/>
            <person name="Tang Y."/>
            <person name="Liu X."/>
            <person name="Han W."/>
            <person name="Peng X."/>
            <person name="Liu R."/>
            <person name="Wang L."/>
        </authorList>
    </citation>
    <scope>NUCLEOTIDE SEQUENCE [LARGE SCALE GENOMIC DNA]</scope>
    <source>
        <strain>NG80-2</strain>
    </source>
</reference>
<sequence>MKKTLLHYLIFSCLLALVLVGFVYASSPIDKKQYMTVTVASGDTLWGLAKQYEPAHGLSPDEFIRWVVDVNRLPSSRLTAGEQIVIPVLKSKQDGSLAVKR</sequence>
<gene>
    <name evidence="1" type="primary">yneA</name>
    <name type="ordered locus">GTNG_1184</name>
</gene>
<feature type="chain" id="PRO_0000346643" description="Cell division suppressor protein YneA">
    <location>
        <begin position="1"/>
        <end position="101"/>
    </location>
</feature>
<feature type="domain" description="LysM" evidence="2">
    <location>
        <begin position="35"/>
        <end position="86"/>
    </location>
</feature>
<protein>
    <recommendedName>
        <fullName evidence="1">Cell division suppressor protein YneA</fullName>
    </recommendedName>
</protein>
<keyword id="KW-0131">Cell cycle</keyword>
<keyword id="KW-0132">Cell division</keyword>
<keyword id="KW-0963">Cytoplasm</keyword>
<keyword id="KW-0227">DNA damage</keyword>
<keyword id="KW-0234">DNA repair</keyword>
<keyword id="KW-0717">Septation</keyword>
<keyword id="KW-0742">SOS response</keyword>
<dbReference type="EMBL" id="CP000557">
    <property type="protein sequence ID" value="ABO66556.1"/>
    <property type="status" value="ALT_INIT"/>
    <property type="molecule type" value="Genomic_DNA"/>
</dbReference>
<dbReference type="RefSeq" id="WP_008879530.1">
    <property type="nucleotide sequence ID" value="NC_009328.1"/>
</dbReference>
<dbReference type="SMR" id="A4IMK2"/>
<dbReference type="GeneID" id="87621226"/>
<dbReference type="KEGG" id="gtn:GTNG_1184"/>
<dbReference type="eggNOG" id="COG1388">
    <property type="taxonomic scope" value="Bacteria"/>
</dbReference>
<dbReference type="HOGENOM" id="CLU_136034_4_0_9"/>
<dbReference type="Proteomes" id="UP000001578">
    <property type="component" value="Chromosome"/>
</dbReference>
<dbReference type="GO" id="GO:0005737">
    <property type="term" value="C:cytoplasm"/>
    <property type="evidence" value="ECO:0007669"/>
    <property type="project" value="UniProtKB-SubCell"/>
</dbReference>
<dbReference type="GO" id="GO:0000917">
    <property type="term" value="P:division septum assembly"/>
    <property type="evidence" value="ECO:0007669"/>
    <property type="project" value="UniProtKB-KW"/>
</dbReference>
<dbReference type="GO" id="GO:0006281">
    <property type="term" value="P:DNA repair"/>
    <property type="evidence" value="ECO:0007669"/>
    <property type="project" value="UniProtKB-KW"/>
</dbReference>
<dbReference type="GO" id="GO:0051782">
    <property type="term" value="P:negative regulation of cell division"/>
    <property type="evidence" value="ECO:0007669"/>
    <property type="project" value="UniProtKB-UniRule"/>
</dbReference>
<dbReference type="GO" id="GO:0009432">
    <property type="term" value="P:SOS response"/>
    <property type="evidence" value="ECO:0007669"/>
    <property type="project" value="UniProtKB-UniRule"/>
</dbReference>
<dbReference type="CDD" id="cd00118">
    <property type="entry name" value="LysM"/>
    <property type="match status" value="1"/>
</dbReference>
<dbReference type="Gene3D" id="3.10.350.10">
    <property type="entry name" value="LysM domain"/>
    <property type="match status" value="1"/>
</dbReference>
<dbReference type="HAMAP" id="MF_02014">
    <property type="entry name" value="YneA"/>
    <property type="match status" value="1"/>
</dbReference>
<dbReference type="InterPro" id="IPR022887">
    <property type="entry name" value="Cell_div_suppressor_YneA"/>
</dbReference>
<dbReference type="InterPro" id="IPR018392">
    <property type="entry name" value="LysM_dom"/>
</dbReference>
<dbReference type="InterPro" id="IPR036779">
    <property type="entry name" value="LysM_dom_sf"/>
</dbReference>
<dbReference type="NCBIfam" id="NF010723">
    <property type="entry name" value="PRK14125.1"/>
    <property type="match status" value="1"/>
</dbReference>
<dbReference type="Pfam" id="PF01476">
    <property type="entry name" value="LysM"/>
    <property type="match status" value="1"/>
</dbReference>
<dbReference type="SMART" id="SM00257">
    <property type="entry name" value="LysM"/>
    <property type="match status" value="1"/>
</dbReference>
<dbReference type="SUPFAM" id="SSF54106">
    <property type="entry name" value="LysM domain"/>
    <property type="match status" value="1"/>
</dbReference>
<dbReference type="PROSITE" id="PS51782">
    <property type="entry name" value="LYSM"/>
    <property type="match status" value="1"/>
</dbReference>